<reference key="1">
    <citation type="journal article" date="2002" name="Proc. Natl. Acad. Sci. U.S.A.">
        <title>Genome sequence of Streptococcus mutans UA159, a cariogenic dental pathogen.</title>
        <authorList>
            <person name="Ajdic D.J."/>
            <person name="McShan W.M."/>
            <person name="McLaughlin R.E."/>
            <person name="Savic G."/>
            <person name="Chang J."/>
            <person name="Carson M.B."/>
            <person name="Primeaux C."/>
            <person name="Tian R."/>
            <person name="Kenton S."/>
            <person name="Jia H.G."/>
            <person name="Lin S.P."/>
            <person name="Qian Y."/>
            <person name="Li S."/>
            <person name="Zhu H."/>
            <person name="Najar F.Z."/>
            <person name="Lai H."/>
            <person name="White J."/>
            <person name="Roe B.A."/>
            <person name="Ferretti J.J."/>
        </authorList>
    </citation>
    <scope>NUCLEOTIDE SEQUENCE [LARGE SCALE GENOMIC DNA]</scope>
    <source>
        <strain>ATCC 700610 / UA159</strain>
    </source>
</reference>
<accession>Q8DW15</accession>
<name>GSHAB_STRMU</name>
<comment type="function">
    <text evidence="2">Synthesizes glutathione from L-glutamate and L-cysteine via gamma-L-glutamyl-L-cysteine.</text>
</comment>
<comment type="catalytic activity">
    <reaction evidence="2">
        <text>L-cysteine + L-glutamate + ATP = gamma-L-glutamyl-L-cysteine + ADP + phosphate + H(+)</text>
        <dbReference type="Rhea" id="RHEA:13285"/>
        <dbReference type="ChEBI" id="CHEBI:15378"/>
        <dbReference type="ChEBI" id="CHEBI:29985"/>
        <dbReference type="ChEBI" id="CHEBI:30616"/>
        <dbReference type="ChEBI" id="CHEBI:35235"/>
        <dbReference type="ChEBI" id="CHEBI:43474"/>
        <dbReference type="ChEBI" id="CHEBI:58173"/>
        <dbReference type="ChEBI" id="CHEBI:456216"/>
        <dbReference type="EC" id="6.3.2.2"/>
    </reaction>
</comment>
<comment type="catalytic activity">
    <reaction evidence="2">
        <text>gamma-L-glutamyl-L-cysteine + glycine + ATP = glutathione + ADP + phosphate + H(+)</text>
        <dbReference type="Rhea" id="RHEA:13557"/>
        <dbReference type="ChEBI" id="CHEBI:15378"/>
        <dbReference type="ChEBI" id="CHEBI:30616"/>
        <dbReference type="ChEBI" id="CHEBI:43474"/>
        <dbReference type="ChEBI" id="CHEBI:57305"/>
        <dbReference type="ChEBI" id="CHEBI:57925"/>
        <dbReference type="ChEBI" id="CHEBI:58173"/>
        <dbReference type="ChEBI" id="CHEBI:456216"/>
        <dbReference type="EC" id="6.3.2.3"/>
    </reaction>
</comment>
<comment type="cofactor">
    <cofactor evidence="1">
        <name>Mg(2+)</name>
        <dbReference type="ChEBI" id="CHEBI:18420"/>
    </cofactor>
    <cofactor evidence="1">
        <name>Mn(2+)</name>
        <dbReference type="ChEBI" id="CHEBI:29035"/>
    </cofactor>
    <text evidence="1">Binds 2 magnesium or manganese ions per subunit.</text>
</comment>
<comment type="pathway">
    <text evidence="2">Sulfur metabolism; glutathione biosynthesis; glutathione from L-cysteine and L-glutamate: step 1/2.</text>
</comment>
<comment type="pathway">
    <text evidence="2">Sulfur metabolism; glutathione biosynthesis; glutathione from L-cysteine and L-glutamate: step 2/2.</text>
</comment>
<comment type="subunit">
    <text evidence="2">Monomer.</text>
</comment>
<comment type="similarity">
    <text evidence="2">In the N-terminal section; belongs to the glutamate--cysteine ligase type 1 family. Type 2 subfamily.</text>
</comment>
<dbReference type="EC" id="6.3.2.2" evidence="2"/>
<dbReference type="EC" id="6.3.2.3" evidence="2"/>
<dbReference type="EMBL" id="AE014133">
    <property type="protein sequence ID" value="AAN58035.1"/>
    <property type="molecule type" value="Genomic_DNA"/>
</dbReference>
<dbReference type="RefSeq" id="NP_720729.1">
    <property type="nucleotide sequence ID" value="NC_004350.2"/>
</dbReference>
<dbReference type="SMR" id="Q8DW15"/>
<dbReference type="STRING" id="210007.SMU_267c"/>
<dbReference type="KEGG" id="smu:SMU_267c"/>
<dbReference type="PATRIC" id="fig|210007.7.peg.233"/>
<dbReference type="eggNOG" id="COG1181">
    <property type="taxonomic scope" value="Bacteria"/>
</dbReference>
<dbReference type="eggNOG" id="COG2918">
    <property type="taxonomic scope" value="Bacteria"/>
</dbReference>
<dbReference type="HOGENOM" id="CLU_020728_1_0_9"/>
<dbReference type="OrthoDB" id="9803907at2"/>
<dbReference type="PhylomeDB" id="Q8DW15"/>
<dbReference type="UniPathway" id="UPA00142">
    <property type="reaction ID" value="UER00209"/>
</dbReference>
<dbReference type="UniPathway" id="UPA00142">
    <property type="reaction ID" value="UER00210"/>
</dbReference>
<dbReference type="Proteomes" id="UP000002512">
    <property type="component" value="Chromosome"/>
</dbReference>
<dbReference type="GO" id="GO:0005829">
    <property type="term" value="C:cytosol"/>
    <property type="evidence" value="ECO:0007669"/>
    <property type="project" value="TreeGrafter"/>
</dbReference>
<dbReference type="GO" id="GO:0005524">
    <property type="term" value="F:ATP binding"/>
    <property type="evidence" value="ECO:0007669"/>
    <property type="project" value="UniProtKB-UniRule"/>
</dbReference>
<dbReference type="GO" id="GO:0004357">
    <property type="term" value="F:glutamate-cysteine ligase activity"/>
    <property type="evidence" value="ECO:0007669"/>
    <property type="project" value="UniProtKB-UniRule"/>
</dbReference>
<dbReference type="GO" id="GO:0004363">
    <property type="term" value="F:glutathione synthase activity"/>
    <property type="evidence" value="ECO:0007669"/>
    <property type="project" value="UniProtKB-UniRule"/>
</dbReference>
<dbReference type="GO" id="GO:0046872">
    <property type="term" value="F:metal ion binding"/>
    <property type="evidence" value="ECO:0007669"/>
    <property type="project" value="UniProtKB-KW"/>
</dbReference>
<dbReference type="Gene3D" id="3.30.590.20">
    <property type="match status" value="1"/>
</dbReference>
<dbReference type="Gene3D" id="3.30.470.20">
    <property type="entry name" value="ATP-grasp fold, B domain"/>
    <property type="match status" value="2"/>
</dbReference>
<dbReference type="HAMAP" id="MF_00782">
    <property type="entry name" value="Glut_biosynth"/>
    <property type="match status" value="1"/>
</dbReference>
<dbReference type="InterPro" id="IPR011761">
    <property type="entry name" value="ATP-grasp"/>
</dbReference>
<dbReference type="InterPro" id="IPR014746">
    <property type="entry name" value="Gln_synth/guanido_kin_cat_dom"/>
</dbReference>
<dbReference type="InterPro" id="IPR007370">
    <property type="entry name" value="Glu_cys_ligase"/>
</dbReference>
<dbReference type="InterPro" id="IPR006335">
    <property type="entry name" value="Glut_biosynth"/>
</dbReference>
<dbReference type="InterPro" id="IPR006334">
    <property type="entry name" value="Glut_cys_ligase"/>
</dbReference>
<dbReference type="InterPro" id="IPR040657">
    <property type="entry name" value="GshAB_ATP-grasp"/>
</dbReference>
<dbReference type="NCBIfam" id="TIGR01435">
    <property type="entry name" value="glu_cys_lig_rel"/>
    <property type="match status" value="1"/>
</dbReference>
<dbReference type="NCBIfam" id="NF002688">
    <property type="entry name" value="PRK02471.1"/>
    <property type="match status" value="1"/>
</dbReference>
<dbReference type="PANTHER" id="PTHR38761">
    <property type="entry name" value="GLUTAMATE--CYSTEINE LIGASE"/>
    <property type="match status" value="1"/>
</dbReference>
<dbReference type="PANTHER" id="PTHR38761:SF1">
    <property type="entry name" value="GLUTAMATE--CYSTEINE LIGASE"/>
    <property type="match status" value="1"/>
</dbReference>
<dbReference type="Pfam" id="PF18419">
    <property type="entry name" value="ATP-grasp_6"/>
    <property type="match status" value="1"/>
</dbReference>
<dbReference type="Pfam" id="PF04262">
    <property type="entry name" value="Glu_cys_ligase"/>
    <property type="match status" value="1"/>
</dbReference>
<dbReference type="SUPFAM" id="SSF55931">
    <property type="entry name" value="Glutamine synthetase/guanido kinase"/>
    <property type="match status" value="1"/>
</dbReference>
<dbReference type="SUPFAM" id="SSF56059">
    <property type="entry name" value="Glutathione synthetase ATP-binding domain-like"/>
    <property type="match status" value="1"/>
</dbReference>
<dbReference type="PROSITE" id="PS50975">
    <property type="entry name" value="ATP_GRASP"/>
    <property type="match status" value="1"/>
</dbReference>
<keyword id="KW-0067">ATP-binding</keyword>
<keyword id="KW-0317">Glutathione biosynthesis</keyword>
<keyword id="KW-0436">Ligase</keyword>
<keyword id="KW-0460">Magnesium</keyword>
<keyword id="KW-0464">Manganese</keyword>
<keyword id="KW-0479">Metal-binding</keyword>
<keyword id="KW-0511">Multifunctional enzyme</keyword>
<keyword id="KW-0547">Nucleotide-binding</keyword>
<keyword id="KW-1185">Reference proteome</keyword>
<proteinExistence type="inferred from homology"/>
<sequence length="754" mass="86187">MHINQLLQHANSDLPLLQANFGLERESLRINKTNHRLAQTPHPTALGSRQFHPYIQTDYSESQMELITPVAHSSKEVLRFLGAITDVAERSIDQNQYLWPLSMPPQITEDEIEIAQLEDDFEFSYRQYLDKKYGKILQSISGIHYNMELGADLMNELFELSGYQSFIDFKNDLYLKVAQNFLNYRWFLTYLYGASPLAEKGFLNEELSQTVRSIRNSHLGYVNTDDIKVPFDSLENYISSIEHYVKSGALSAEKEFYSAVRLRGSKHNRDYLTKGITYLEFRCFDLNPFNNRGITQETIDSVHLFILAMLWLDTPKKLNQALDKAQKLNDKIALSHPLEKLPKENSASLIIEAMEALIKHFKLPSYYDDLLIAIKKQVENPKLTLSGRLFEHIKHASLEHFGQKKGQDYHNYAWQNYYALKGYENMELSTQMLLFDTIQKGIHFEILDENDQFLKLWHNDHIEYVKNGNMTSKDNYVIPLAMANKVVTKKILRENGYPVPAGAEFDNKDEALRYYSQIKNKPIVVKPKTTNFGLGISIFETAASHNDYEKALDIAFIEDYSVLVEEFIPGTEYRFFILDGKCEAVLLRVAANVVGDGHSTVRQLVAQKNRDPLRGREHRSPLEIIDLGDIELLMLQQEGYTLEDILPKGKKVNLRGNSNISTGGDSIDVTETMDPSYKQLAANMATAMGAWVCGVDLIIPDTNLKASKGKPNCTCIELNFNPSMYMHTYCYQGPGQVITGKILAKLFPEISTKI</sequence>
<organism>
    <name type="scientific">Streptococcus mutans serotype c (strain ATCC 700610 / UA159)</name>
    <dbReference type="NCBI Taxonomy" id="210007"/>
    <lineage>
        <taxon>Bacteria</taxon>
        <taxon>Bacillati</taxon>
        <taxon>Bacillota</taxon>
        <taxon>Bacilli</taxon>
        <taxon>Lactobacillales</taxon>
        <taxon>Streptococcaceae</taxon>
        <taxon>Streptococcus</taxon>
    </lineage>
</organism>
<protein>
    <recommendedName>
        <fullName evidence="2">Glutathione biosynthesis bifunctional protein GshAB</fullName>
    </recommendedName>
    <alternativeName>
        <fullName evidence="2">Gamma-GCS-GS</fullName>
        <shortName evidence="2">GCS-GS</shortName>
    </alternativeName>
    <domain>
        <recommendedName>
            <fullName evidence="2">Glutamate--cysteine ligase</fullName>
            <ecNumber evidence="2">6.3.2.2</ecNumber>
        </recommendedName>
        <alternativeName>
            <fullName evidence="2">Gamma-ECS</fullName>
            <shortName evidence="2">GCS</shortName>
        </alternativeName>
        <alternativeName>
            <fullName evidence="2">Gamma-glutamylcysteine synthetase</fullName>
        </alternativeName>
    </domain>
    <domain>
        <recommendedName>
            <fullName evidence="2">Glutathione synthetase</fullName>
            <ecNumber evidence="2">6.3.2.3</ecNumber>
        </recommendedName>
        <alternativeName>
            <fullName evidence="2">GSH synthetase</fullName>
            <shortName evidence="2">GS</shortName>
            <shortName evidence="2">GSH-S</shortName>
            <shortName evidence="2">GSHase</shortName>
        </alternativeName>
        <alternativeName>
            <fullName evidence="2">Glutathione synthase</fullName>
        </alternativeName>
    </domain>
</protein>
<gene>
    <name evidence="2" type="primary">gshAB</name>
    <name evidence="2" type="synonym">gshF</name>
    <name type="ordered locus">SMU_267c</name>
</gene>
<feature type="chain" id="PRO_0000192560" description="Glutathione biosynthesis bifunctional protein GshAB">
    <location>
        <begin position="1"/>
        <end position="754"/>
    </location>
</feature>
<feature type="domain" description="ATP-grasp" evidence="2">
    <location>
        <begin position="489"/>
        <end position="752"/>
    </location>
</feature>
<feature type="region of interest" description="Glutamate--cysteine ligase">
    <location>
        <begin position="1"/>
        <end position="333"/>
    </location>
</feature>
<feature type="binding site" evidence="2">
    <location>
        <begin position="516"/>
        <end position="574"/>
    </location>
    <ligand>
        <name>ATP</name>
        <dbReference type="ChEBI" id="CHEBI:30616"/>
    </ligand>
</feature>
<feature type="binding site" evidence="2">
    <location>
        <position position="696"/>
    </location>
    <ligand>
        <name>Mg(2+)</name>
        <dbReference type="ChEBI" id="CHEBI:18420"/>
        <label>1</label>
    </ligand>
</feature>
<feature type="binding site" evidence="2">
    <location>
        <position position="696"/>
    </location>
    <ligand>
        <name>Mn(2+)</name>
        <dbReference type="ChEBI" id="CHEBI:29035"/>
        <label>1</label>
    </ligand>
</feature>
<feature type="binding site" evidence="2">
    <location>
        <position position="717"/>
    </location>
    <ligand>
        <name>Mg(2+)</name>
        <dbReference type="ChEBI" id="CHEBI:18420"/>
        <label>1</label>
    </ligand>
</feature>
<feature type="binding site" evidence="2">
    <location>
        <position position="717"/>
    </location>
    <ligand>
        <name>Mg(2+)</name>
        <dbReference type="ChEBI" id="CHEBI:18420"/>
        <label>2</label>
    </ligand>
</feature>
<feature type="binding site" evidence="2">
    <location>
        <position position="717"/>
    </location>
    <ligand>
        <name>Mn(2+)</name>
        <dbReference type="ChEBI" id="CHEBI:29035"/>
        <label>1</label>
    </ligand>
</feature>
<feature type="binding site" evidence="2">
    <location>
        <position position="717"/>
    </location>
    <ligand>
        <name>Mn(2+)</name>
        <dbReference type="ChEBI" id="CHEBI:29035"/>
        <label>2</label>
    </ligand>
</feature>
<feature type="binding site" evidence="2">
    <location>
        <position position="719"/>
    </location>
    <ligand>
        <name>Mg(2+)</name>
        <dbReference type="ChEBI" id="CHEBI:18420"/>
        <label>2</label>
    </ligand>
</feature>
<feature type="binding site" evidence="2">
    <location>
        <position position="719"/>
    </location>
    <ligand>
        <name>Mn(2+)</name>
        <dbReference type="ChEBI" id="CHEBI:29035"/>
        <label>2</label>
    </ligand>
</feature>
<evidence type="ECO:0000250" key="1"/>
<evidence type="ECO:0000255" key="2">
    <source>
        <dbReference type="HAMAP-Rule" id="MF_00782"/>
    </source>
</evidence>